<evidence type="ECO:0000255" key="1">
    <source>
        <dbReference type="HAMAP-Rule" id="MF_00294"/>
    </source>
</evidence>
<evidence type="ECO:0000305" key="2"/>
<dbReference type="EMBL" id="CP000025">
    <property type="protein sequence ID" value="AAW35108.1"/>
    <property type="molecule type" value="Genomic_DNA"/>
</dbReference>
<dbReference type="RefSeq" id="WP_002793551.1">
    <property type="nucleotide sequence ID" value="NC_003912.7"/>
</dbReference>
<dbReference type="SMR" id="Q5HVZ6"/>
<dbReference type="GeneID" id="44003941"/>
<dbReference type="KEGG" id="cjr:CJE0521"/>
<dbReference type="HOGENOM" id="CLU_190949_0_2_7"/>
<dbReference type="GO" id="GO:0005737">
    <property type="term" value="C:cytoplasm"/>
    <property type="evidence" value="ECO:0007669"/>
    <property type="project" value="UniProtKB-ARBA"/>
</dbReference>
<dbReference type="GO" id="GO:1990904">
    <property type="term" value="C:ribonucleoprotein complex"/>
    <property type="evidence" value="ECO:0007669"/>
    <property type="project" value="UniProtKB-KW"/>
</dbReference>
<dbReference type="GO" id="GO:0005840">
    <property type="term" value="C:ribosome"/>
    <property type="evidence" value="ECO:0007669"/>
    <property type="project" value="UniProtKB-KW"/>
</dbReference>
<dbReference type="GO" id="GO:0003735">
    <property type="term" value="F:structural constituent of ribosome"/>
    <property type="evidence" value="ECO:0007669"/>
    <property type="project" value="InterPro"/>
</dbReference>
<dbReference type="GO" id="GO:0006412">
    <property type="term" value="P:translation"/>
    <property type="evidence" value="ECO:0007669"/>
    <property type="project" value="UniProtKB-UniRule"/>
</dbReference>
<dbReference type="Gene3D" id="2.20.28.120">
    <property type="entry name" value="Ribosomal protein L33"/>
    <property type="match status" value="1"/>
</dbReference>
<dbReference type="HAMAP" id="MF_00294">
    <property type="entry name" value="Ribosomal_bL33"/>
    <property type="match status" value="1"/>
</dbReference>
<dbReference type="InterPro" id="IPR001705">
    <property type="entry name" value="Ribosomal_bL33"/>
</dbReference>
<dbReference type="InterPro" id="IPR018264">
    <property type="entry name" value="Ribosomal_bL33_CS"/>
</dbReference>
<dbReference type="InterPro" id="IPR038584">
    <property type="entry name" value="Ribosomal_bL33_sf"/>
</dbReference>
<dbReference type="InterPro" id="IPR011332">
    <property type="entry name" value="Ribosomal_zn-bd"/>
</dbReference>
<dbReference type="NCBIfam" id="NF001764">
    <property type="entry name" value="PRK00504.1"/>
    <property type="match status" value="1"/>
</dbReference>
<dbReference type="NCBIfam" id="NF001860">
    <property type="entry name" value="PRK00595.1"/>
    <property type="match status" value="1"/>
</dbReference>
<dbReference type="NCBIfam" id="TIGR01023">
    <property type="entry name" value="rpmG_bact"/>
    <property type="match status" value="1"/>
</dbReference>
<dbReference type="PANTHER" id="PTHR43168">
    <property type="entry name" value="50S RIBOSOMAL PROTEIN L33, CHLOROPLASTIC"/>
    <property type="match status" value="1"/>
</dbReference>
<dbReference type="PANTHER" id="PTHR43168:SF6">
    <property type="entry name" value="LARGE RIBOSOMAL SUBUNIT PROTEIN BL33A"/>
    <property type="match status" value="1"/>
</dbReference>
<dbReference type="Pfam" id="PF00471">
    <property type="entry name" value="Ribosomal_L33"/>
    <property type="match status" value="1"/>
</dbReference>
<dbReference type="SUPFAM" id="SSF57829">
    <property type="entry name" value="Zn-binding ribosomal proteins"/>
    <property type="match status" value="1"/>
</dbReference>
<dbReference type="PROSITE" id="PS00582">
    <property type="entry name" value="RIBOSOMAL_L33"/>
    <property type="match status" value="1"/>
</dbReference>
<comment type="similarity">
    <text evidence="1">Belongs to the bacterial ribosomal protein bL33 family.</text>
</comment>
<proteinExistence type="inferred from homology"/>
<protein>
    <recommendedName>
        <fullName evidence="1">Large ribosomal subunit protein bL33</fullName>
    </recommendedName>
    <alternativeName>
        <fullName evidence="2">50S ribosomal protein L33</fullName>
    </alternativeName>
</protein>
<feature type="chain" id="PRO_0000356417" description="Large ribosomal subunit protein bL33">
    <location>
        <begin position="1"/>
        <end position="52"/>
    </location>
</feature>
<name>RL33_CAMJR</name>
<keyword id="KW-0687">Ribonucleoprotein</keyword>
<keyword id="KW-0689">Ribosomal protein</keyword>
<organism>
    <name type="scientific">Campylobacter jejuni (strain RM1221)</name>
    <dbReference type="NCBI Taxonomy" id="195099"/>
    <lineage>
        <taxon>Bacteria</taxon>
        <taxon>Pseudomonadati</taxon>
        <taxon>Campylobacterota</taxon>
        <taxon>Epsilonproteobacteria</taxon>
        <taxon>Campylobacterales</taxon>
        <taxon>Campylobacteraceae</taxon>
        <taxon>Campylobacter</taxon>
    </lineage>
</organism>
<accession>Q5HVZ6</accession>
<sequence length="52" mass="6156">MRIKVGLKCEECGDINYSTYKNSKNTTEKLELKKYCPRLKKHTLHKEVKLKS</sequence>
<gene>
    <name evidence="1" type="primary">rpmG</name>
    <name type="ordered locus">CJE0521</name>
</gene>
<reference key="1">
    <citation type="journal article" date="2005" name="PLoS Biol.">
        <title>Major structural differences and novel potential virulence mechanisms from the genomes of multiple Campylobacter species.</title>
        <authorList>
            <person name="Fouts D.E."/>
            <person name="Mongodin E.F."/>
            <person name="Mandrell R.E."/>
            <person name="Miller W.G."/>
            <person name="Rasko D.A."/>
            <person name="Ravel J."/>
            <person name="Brinkac L.M."/>
            <person name="DeBoy R.T."/>
            <person name="Parker C.T."/>
            <person name="Daugherty S.C."/>
            <person name="Dodson R.J."/>
            <person name="Durkin A.S."/>
            <person name="Madupu R."/>
            <person name="Sullivan S.A."/>
            <person name="Shetty J.U."/>
            <person name="Ayodeji M.A."/>
            <person name="Shvartsbeyn A."/>
            <person name="Schatz M.C."/>
            <person name="Badger J.H."/>
            <person name="Fraser C.M."/>
            <person name="Nelson K.E."/>
        </authorList>
    </citation>
    <scope>NUCLEOTIDE SEQUENCE [LARGE SCALE GENOMIC DNA]</scope>
    <source>
        <strain>RM1221</strain>
    </source>
</reference>